<feature type="chain" id="PRO_0000182909" description="Deoxyuridine 5'-triphosphate nucleotidohydrolase">
    <location>
        <begin position="1"/>
        <end position="175"/>
    </location>
</feature>
<feature type="region of interest" description="Disordered" evidence="2">
    <location>
        <begin position="138"/>
        <end position="175"/>
    </location>
</feature>
<feature type="binding site" evidence="1">
    <location>
        <begin position="67"/>
        <end position="69"/>
    </location>
    <ligand>
        <name>substrate</name>
    </ligand>
</feature>
<feature type="binding site" evidence="1">
    <location>
        <position position="80"/>
    </location>
    <ligand>
        <name>substrate</name>
    </ligand>
</feature>
<feature type="binding site" evidence="1">
    <location>
        <begin position="84"/>
        <end position="86"/>
    </location>
    <ligand>
        <name>substrate</name>
    </ligand>
</feature>
<feature type="binding site" evidence="1">
    <location>
        <position position="94"/>
    </location>
    <ligand>
        <name>substrate</name>
    </ligand>
</feature>
<dbReference type="EC" id="3.6.1.23" evidence="1"/>
<dbReference type="EMBL" id="BA000030">
    <property type="protein sequence ID" value="BAC70110.1"/>
    <property type="molecule type" value="Genomic_DNA"/>
</dbReference>
<dbReference type="RefSeq" id="WP_010983837.1">
    <property type="nucleotide sequence ID" value="NZ_JZJK01000086.1"/>
</dbReference>
<dbReference type="SMR" id="Q82KK4"/>
<dbReference type="GeneID" id="41539487"/>
<dbReference type="KEGG" id="sma:SAVERM_2399"/>
<dbReference type="eggNOG" id="COG0756">
    <property type="taxonomic scope" value="Bacteria"/>
</dbReference>
<dbReference type="HOGENOM" id="CLU_068508_1_3_11"/>
<dbReference type="OrthoDB" id="9809956at2"/>
<dbReference type="UniPathway" id="UPA00610">
    <property type="reaction ID" value="UER00666"/>
</dbReference>
<dbReference type="Proteomes" id="UP000000428">
    <property type="component" value="Chromosome"/>
</dbReference>
<dbReference type="GO" id="GO:0004170">
    <property type="term" value="F:dUTP diphosphatase activity"/>
    <property type="evidence" value="ECO:0007669"/>
    <property type="project" value="UniProtKB-UniRule"/>
</dbReference>
<dbReference type="GO" id="GO:0000287">
    <property type="term" value="F:magnesium ion binding"/>
    <property type="evidence" value="ECO:0007669"/>
    <property type="project" value="UniProtKB-UniRule"/>
</dbReference>
<dbReference type="GO" id="GO:0006226">
    <property type="term" value="P:dUMP biosynthetic process"/>
    <property type="evidence" value="ECO:0007669"/>
    <property type="project" value="UniProtKB-UniRule"/>
</dbReference>
<dbReference type="GO" id="GO:0046081">
    <property type="term" value="P:dUTP catabolic process"/>
    <property type="evidence" value="ECO:0007669"/>
    <property type="project" value="InterPro"/>
</dbReference>
<dbReference type="CDD" id="cd07557">
    <property type="entry name" value="trimeric_dUTPase"/>
    <property type="match status" value="1"/>
</dbReference>
<dbReference type="FunFam" id="2.70.40.10:FF:000008">
    <property type="entry name" value="Deoxyuridine 5'-triphosphate nucleotidohydrolase"/>
    <property type="match status" value="1"/>
</dbReference>
<dbReference type="Gene3D" id="2.70.40.10">
    <property type="match status" value="1"/>
</dbReference>
<dbReference type="HAMAP" id="MF_00116">
    <property type="entry name" value="dUTPase_bact"/>
    <property type="match status" value="1"/>
</dbReference>
<dbReference type="InterPro" id="IPR008181">
    <property type="entry name" value="dUTPase"/>
</dbReference>
<dbReference type="InterPro" id="IPR029054">
    <property type="entry name" value="dUTPase-like"/>
</dbReference>
<dbReference type="InterPro" id="IPR036157">
    <property type="entry name" value="dUTPase-like_sf"/>
</dbReference>
<dbReference type="InterPro" id="IPR033704">
    <property type="entry name" value="dUTPase_trimeric"/>
</dbReference>
<dbReference type="NCBIfam" id="TIGR00576">
    <property type="entry name" value="dut"/>
    <property type="match status" value="1"/>
</dbReference>
<dbReference type="NCBIfam" id="NF001862">
    <property type="entry name" value="PRK00601.1"/>
    <property type="match status" value="1"/>
</dbReference>
<dbReference type="PANTHER" id="PTHR11241">
    <property type="entry name" value="DEOXYURIDINE 5'-TRIPHOSPHATE NUCLEOTIDOHYDROLASE"/>
    <property type="match status" value="1"/>
</dbReference>
<dbReference type="PANTHER" id="PTHR11241:SF0">
    <property type="entry name" value="DEOXYURIDINE 5'-TRIPHOSPHATE NUCLEOTIDOHYDROLASE"/>
    <property type="match status" value="1"/>
</dbReference>
<dbReference type="Pfam" id="PF00692">
    <property type="entry name" value="dUTPase"/>
    <property type="match status" value="1"/>
</dbReference>
<dbReference type="SUPFAM" id="SSF51283">
    <property type="entry name" value="dUTPase-like"/>
    <property type="match status" value="1"/>
</dbReference>
<name>DUT_STRAW</name>
<evidence type="ECO:0000255" key="1">
    <source>
        <dbReference type="HAMAP-Rule" id="MF_00116"/>
    </source>
</evidence>
<evidence type="ECO:0000256" key="2">
    <source>
        <dbReference type="SAM" id="MobiDB-lite"/>
    </source>
</evidence>
<accession>Q82KK4</accession>
<comment type="function">
    <text evidence="1">This enzyme is involved in nucleotide metabolism: it produces dUMP, the immediate precursor of thymidine nucleotides and it decreases the intracellular concentration of dUTP so that uracil cannot be incorporated into DNA.</text>
</comment>
<comment type="catalytic activity">
    <reaction evidence="1">
        <text>dUTP + H2O = dUMP + diphosphate + H(+)</text>
        <dbReference type="Rhea" id="RHEA:10248"/>
        <dbReference type="ChEBI" id="CHEBI:15377"/>
        <dbReference type="ChEBI" id="CHEBI:15378"/>
        <dbReference type="ChEBI" id="CHEBI:33019"/>
        <dbReference type="ChEBI" id="CHEBI:61555"/>
        <dbReference type="ChEBI" id="CHEBI:246422"/>
        <dbReference type="EC" id="3.6.1.23"/>
    </reaction>
</comment>
<comment type="cofactor">
    <cofactor evidence="1">
        <name>Mg(2+)</name>
        <dbReference type="ChEBI" id="CHEBI:18420"/>
    </cofactor>
</comment>
<comment type="pathway">
    <text evidence="1">Pyrimidine metabolism; dUMP biosynthesis; dUMP from dCTP (dUTP route): step 2/2.</text>
</comment>
<comment type="similarity">
    <text evidence="1">Belongs to the dUTPase family.</text>
</comment>
<protein>
    <recommendedName>
        <fullName evidence="1">Deoxyuridine 5'-triphosphate nucleotidohydrolase</fullName>
        <shortName evidence="1">dUTPase</shortName>
        <ecNumber evidence="1">3.6.1.23</ecNumber>
    </recommendedName>
    <alternativeName>
        <fullName evidence="1">dUTP pyrophosphatase</fullName>
    </alternativeName>
</protein>
<gene>
    <name evidence="1" type="primary">dut</name>
    <name type="ordered locus">SAV_2399</name>
</gene>
<keyword id="KW-0378">Hydrolase</keyword>
<keyword id="KW-0460">Magnesium</keyword>
<keyword id="KW-0479">Metal-binding</keyword>
<keyword id="KW-0546">Nucleotide metabolism</keyword>
<keyword id="KW-1185">Reference proteome</keyword>
<proteinExistence type="inferred from homology"/>
<organism>
    <name type="scientific">Streptomyces avermitilis (strain ATCC 31267 / DSM 46492 / JCM 5070 / NBRC 14893 / NCIMB 12804 / NRRL 8165 / MA-4680)</name>
    <dbReference type="NCBI Taxonomy" id="227882"/>
    <lineage>
        <taxon>Bacteria</taxon>
        <taxon>Bacillati</taxon>
        <taxon>Actinomycetota</taxon>
        <taxon>Actinomycetes</taxon>
        <taxon>Kitasatosporales</taxon>
        <taxon>Streptomycetaceae</taxon>
        <taxon>Streptomyces</taxon>
    </lineage>
</organism>
<sequence length="175" mass="18558">MTRAPLNVLLRRVDPDVPLPAYEHPGDAGADLRTTESCELKPGERAVLPTGVSVALPEGYAAFVHPRSGLAARCGVALVNAPGTVDAGYRGEIKVIVVNLDPRESVRFERFDRIAQLVVQQVERVRFQEVAELPDSARAEGGFGSTGGHAAVGADTNGQQGGNRYASVVSDRKGQ</sequence>
<reference key="1">
    <citation type="journal article" date="2001" name="Proc. Natl. Acad. Sci. U.S.A.">
        <title>Genome sequence of an industrial microorganism Streptomyces avermitilis: deducing the ability of producing secondary metabolites.</title>
        <authorList>
            <person name="Omura S."/>
            <person name="Ikeda H."/>
            <person name="Ishikawa J."/>
            <person name="Hanamoto A."/>
            <person name="Takahashi C."/>
            <person name="Shinose M."/>
            <person name="Takahashi Y."/>
            <person name="Horikawa H."/>
            <person name="Nakazawa H."/>
            <person name="Osonoe T."/>
            <person name="Kikuchi H."/>
            <person name="Shiba T."/>
            <person name="Sakaki Y."/>
            <person name="Hattori M."/>
        </authorList>
    </citation>
    <scope>NUCLEOTIDE SEQUENCE [LARGE SCALE GENOMIC DNA]</scope>
    <source>
        <strain>ATCC 31267 / DSM 46492 / JCM 5070 / NBRC 14893 / NCIMB 12804 / NRRL 8165 / MA-4680</strain>
    </source>
</reference>
<reference key="2">
    <citation type="journal article" date="2003" name="Nat. Biotechnol.">
        <title>Complete genome sequence and comparative analysis of the industrial microorganism Streptomyces avermitilis.</title>
        <authorList>
            <person name="Ikeda H."/>
            <person name="Ishikawa J."/>
            <person name="Hanamoto A."/>
            <person name="Shinose M."/>
            <person name="Kikuchi H."/>
            <person name="Shiba T."/>
            <person name="Sakaki Y."/>
            <person name="Hattori M."/>
            <person name="Omura S."/>
        </authorList>
    </citation>
    <scope>NUCLEOTIDE SEQUENCE [LARGE SCALE GENOMIC DNA]</scope>
    <source>
        <strain>ATCC 31267 / DSM 46492 / JCM 5070 / NBRC 14893 / NCIMB 12804 / NRRL 8165 / MA-4680</strain>
    </source>
</reference>